<sequence>MKISYLDFEQSVAELDAKVEELHALNQPGIADDISRLEVKARKELQRIYSKLGAWQTVQVARHPQRPYTMDYVQALFTEVQVLAGDRAFADDQAIIGGLARFNGQPIVWMGHQKGRDTKEKIQRNFGMPRPEGYRKALRLLRLAERFALPVFTFIDTPGAYPGIGAEERGQSEAIARNLAVMSDLAVPIICTVIGEGGSGGALAIGVGDRMLMLEYGVYSVISPEGCASILWKNAAMAAEAAETLGITARRLQGMGLVDEVLAEPLGGAHRDPEAVFALARERFAHHLQELQAMDTSKLLTTRYERLMHYGVVGAA</sequence>
<accession>B7JA39</accession>
<feature type="chain" id="PRO_1000148726" description="Acetyl-coenzyme A carboxylase carboxyl transferase subunit alpha">
    <location>
        <begin position="1"/>
        <end position="316"/>
    </location>
</feature>
<feature type="domain" description="CoA carboxyltransferase C-terminal" evidence="2">
    <location>
        <begin position="40"/>
        <end position="290"/>
    </location>
</feature>
<reference key="1">
    <citation type="journal article" date="2008" name="BMC Genomics">
        <title>Acidithiobacillus ferrooxidans metabolism: from genome sequence to industrial applications.</title>
        <authorList>
            <person name="Valdes J."/>
            <person name="Pedroso I."/>
            <person name="Quatrini R."/>
            <person name="Dodson R.J."/>
            <person name="Tettelin H."/>
            <person name="Blake R. II"/>
            <person name="Eisen J.A."/>
            <person name="Holmes D.S."/>
        </authorList>
    </citation>
    <scope>NUCLEOTIDE SEQUENCE [LARGE SCALE GENOMIC DNA]</scope>
    <source>
        <strain>ATCC 23270 / DSM 14882 / CIP 104768 / NCIMB 8455</strain>
    </source>
</reference>
<comment type="function">
    <text evidence="1">Component of the acetyl coenzyme A carboxylase (ACC) complex. First, biotin carboxylase catalyzes the carboxylation of biotin on its carrier protein (BCCP) and then the CO(2) group is transferred by the carboxyltransferase to acetyl-CoA to form malonyl-CoA.</text>
</comment>
<comment type="catalytic activity">
    <reaction evidence="1">
        <text>N(6)-carboxybiotinyl-L-lysyl-[protein] + acetyl-CoA = N(6)-biotinyl-L-lysyl-[protein] + malonyl-CoA</text>
        <dbReference type="Rhea" id="RHEA:54728"/>
        <dbReference type="Rhea" id="RHEA-COMP:10505"/>
        <dbReference type="Rhea" id="RHEA-COMP:10506"/>
        <dbReference type="ChEBI" id="CHEBI:57288"/>
        <dbReference type="ChEBI" id="CHEBI:57384"/>
        <dbReference type="ChEBI" id="CHEBI:83144"/>
        <dbReference type="ChEBI" id="CHEBI:83145"/>
        <dbReference type="EC" id="2.1.3.15"/>
    </reaction>
</comment>
<comment type="pathway">
    <text evidence="1">Lipid metabolism; malonyl-CoA biosynthesis; malonyl-CoA from acetyl-CoA: step 1/1.</text>
</comment>
<comment type="subunit">
    <text evidence="1">Acetyl-CoA carboxylase is a heterohexamer composed of biotin carboxyl carrier protein (AccB), biotin carboxylase (AccC) and two subunits each of ACCase subunit alpha (AccA) and ACCase subunit beta (AccD).</text>
</comment>
<comment type="subcellular location">
    <subcellularLocation>
        <location evidence="1">Cytoplasm</location>
    </subcellularLocation>
</comment>
<comment type="similarity">
    <text evidence="1">Belongs to the AccA family.</text>
</comment>
<name>ACCA_ACIF2</name>
<dbReference type="EC" id="2.1.3.15" evidence="1"/>
<dbReference type="EMBL" id="CP001219">
    <property type="protein sequence ID" value="ACK80035.1"/>
    <property type="molecule type" value="Genomic_DNA"/>
</dbReference>
<dbReference type="RefSeq" id="WP_012536536.1">
    <property type="nucleotide sequence ID" value="NC_011761.1"/>
</dbReference>
<dbReference type="SMR" id="B7JA39"/>
<dbReference type="STRING" id="243159.AFE_1462"/>
<dbReference type="PaxDb" id="243159-AFE_1462"/>
<dbReference type="GeneID" id="65280683"/>
<dbReference type="KEGG" id="afr:AFE_1462"/>
<dbReference type="eggNOG" id="COG0825">
    <property type="taxonomic scope" value="Bacteria"/>
</dbReference>
<dbReference type="HOGENOM" id="CLU_015486_0_2_6"/>
<dbReference type="UniPathway" id="UPA00655">
    <property type="reaction ID" value="UER00711"/>
</dbReference>
<dbReference type="Proteomes" id="UP000001362">
    <property type="component" value="Chromosome"/>
</dbReference>
<dbReference type="GO" id="GO:0009317">
    <property type="term" value="C:acetyl-CoA carboxylase complex"/>
    <property type="evidence" value="ECO:0007669"/>
    <property type="project" value="InterPro"/>
</dbReference>
<dbReference type="GO" id="GO:0003989">
    <property type="term" value="F:acetyl-CoA carboxylase activity"/>
    <property type="evidence" value="ECO:0007669"/>
    <property type="project" value="InterPro"/>
</dbReference>
<dbReference type="GO" id="GO:0005524">
    <property type="term" value="F:ATP binding"/>
    <property type="evidence" value="ECO:0007669"/>
    <property type="project" value="UniProtKB-KW"/>
</dbReference>
<dbReference type="GO" id="GO:0016743">
    <property type="term" value="F:carboxyl- or carbamoyltransferase activity"/>
    <property type="evidence" value="ECO:0007669"/>
    <property type="project" value="UniProtKB-UniRule"/>
</dbReference>
<dbReference type="GO" id="GO:0006633">
    <property type="term" value="P:fatty acid biosynthetic process"/>
    <property type="evidence" value="ECO:0007669"/>
    <property type="project" value="UniProtKB-KW"/>
</dbReference>
<dbReference type="GO" id="GO:2001295">
    <property type="term" value="P:malonyl-CoA biosynthetic process"/>
    <property type="evidence" value="ECO:0007669"/>
    <property type="project" value="UniProtKB-UniRule"/>
</dbReference>
<dbReference type="Gene3D" id="3.90.226.10">
    <property type="entry name" value="2-enoyl-CoA Hydratase, Chain A, domain 1"/>
    <property type="match status" value="1"/>
</dbReference>
<dbReference type="HAMAP" id="MF_00823">
    <property type="entry name" value="AcetylCoA_CT_alpha"/>
    <property type="match status" value="1"/>
</dbReference>
<dbReference type="InterPro" id="IPR001095">
    <property type="entry name" value="Acetyl_CoA_COase_a_su"/>
</dbReference>
<dbReference type="InterPro" id="IPR029045">
    <property type="entry name" value="ClpP/crotonase-like_dom_sf"/>
</dbReference>
<dbReference type="InterPro" id="IPR011763">
    <property type="entry name" value="COA_CT_C"/>
</dbReference>
<dbReference type="NCBIfam" id="TIGR00513">
    <property type="entry name" value="accA"/>
    <property type="match status" value="1"/>
</dbReference>
<dbReference type="NCBIfam" id="NF041504">
    <property type="entry name" value="AccA_sub"/>
    <property type="match status" value="1"/>
</dbReference>
<dbReference type="NCBIfam" id="NF004344">
    <property type="entry name" value="PRK05724.1"/>
    <property type="match status" value="1"/>
</dbReference>
<dbReference type="PANTHER" id="PTHR42853">
    <property type="entry name" value="ACETYL-COENZYME A CARBOXYLASE CARBOXYL TRANSFERASE SUBUNIT ALPHA"/>
    <property type="match status" value="1"/>
</dbReference>
<dbReference type="PANTHER" id="PTHR42853:SF3">
    <property type="entry name" value="ACETYL-COENZYME A CARBOXYLASE CARBOXYL TRANSFERASE SUBUNIT ALPHA, CHLOROPLASTIC"/>
    <property type="match status" value="1"/>
</dbReference>
<dbReference type="Pfam" id="PF03255">
    <property type="entry name" value="ACCA"/>
    <property type="match status" value="1"/>
</dbReference>
<dbReference type="PRINTS" id="PR01069">
    <property type="entry name" value="ACCCTRFRASEA"/>
</dbReference>
<dbReference type="SUPFAM" id="SSF52096">
    <property type="entry name" value="ClpP/crotonase"/>
    <property type="match status" value="1"/>
</dbReference>
<dbReference type="PROSITE" id="PS50989">
    <property type="entry name" value="COA_CT_CTER"/>
    <property type="match status" value="1"/>
</dbReference>
<evidence type="ECO:0000255" key="1">
    <source>
        <dbReference type="HAMAP-Rule" id="MF_00823"/>
    </source>
</evidence>
<evidence type="ECO:0000255" key="2">
    <source>
        <dbReference type="PROSITE-ProRule" id="PRU01137"/>
    </source>
</evidence>
<keyword id="KW-0067">ATP-binding</keyword>
<keyword id="KW-0963">Cytoplasm</keyword>
<keyword id="KW-0275">Fatty acid biosynthesis</keyword>
<keyword id="KW-0276">Fatty acid metabolism</keyword>
<keyword id="KW-0444">Lipid biosynthesis</keyword>
<keyword id="KW-0443">Lipid metabolism</keyword>
<keyword id="KW-0547">Nucleotide-binding</keyword>
<keyword id="KW-1185">Reference proteome</keyword>
<keyword id="KW-0808">Transferase</keyword>
<protein>
    <recommendedName>
        <fullName evidence="1">Acetyl-coenzyme A carboxylase carboxyl transferase subunit alpha</fullName>
        <shortName evidence="1">ACCase subunit alpha</shortName>
        <shortName evidence="1">Acetyl-CoA carboxylase carboxyltransferase subunit alpha</shortName>
        <ecNumber evidence="1">2.1.3.15</ecNumber>
    </recommendedName>
</protein>
<gene>
    <name evidence="1" type="primary">accA</name>
    <name type="ordered locus">AFE_1462</name>
</gene>
<organism>
    <name type="scientific">Acidithiobacillus ferrooxidans (strain ATCC 23270 / DSM 14882 / CIP 104768 / NCIMB 8455)</name>
    <name type="common">Ferrobacillus ferrooxidans (strain ATCC 23270)</name>
    <dbReference type="NCBI Taxonomy" id="243159"/>
    <lineage>
        <taxon>Bacteria</taxon>
        <taxon>Pseudomonadati</taxon>
        <taxon>Pseudomonadota</taxon>
        <taxon>Acidithiobacillia</taxon>
        <taxon>Acidithiobacillales</taxon>
        <taxon>Acidithiobacillaceae</taxon>
        <taxon>Acidithiobacillus</taxon>
    </lineage>
</organism>
<proteinExistence type="inferred from homology"/>